<organism>
    <name type="scientific">Mus musculus</name>
    <name type="common">Mouse</name>
    <dbReference type="NCBI Taxonomy" id="10090"/>
    <lineage>
        <taxon>Eukaryota</taxon>
        <taxon>Metazoa</taxon>
        <taxon>Chordata</taxon>
        <taxon>Craniata</taxon>
        <taxon>Vertebrata</taxon>
        <taxon>Euteleostomi</taxon>
        <taxon>Mammalia</taxon>
        <taxon>Eutheria</taxon>
        <taxon>Euarchontoglires</taxon>
        <taxon>Glires</taxon>
        <taxon>Rodentia</taxon>
        <taxon>Myomorpha</taxon>
        <taxon>Muroidea</taxon>
        <taxon>Muridae</taxon>
        <taxon>Murinae</taxon>
        <taxon>Mus</taxon>
        <taxon>Mus</taxon>
    </lineage>
</organism>
<dbReference type="EMBL" id="AK039337">
    <property type="protein sequence ID" value="BAC30322.2"/>
    <property type="molecule type" value="mRNA"/>
</dbReference>
<dbReference type="EMBL" id="AK044719">
    <property type="protein sequence ID" value="BAC32048.1"/>
    <property type="molecule type" value="mRNA"/>
</dbReference>
<dbReference type="EMBL" id="AK031120">
    <property type="protein sequence ID" value="BAC27263.1"/>
    <property type="molecule type" value="mRNA"/>
</dbReference>
<dbReference type="EMBL" id="AK171689">
    <property type="protein sequence ID" value="BAE42613.1"/>
    <property type="molecule type" value="mRNA"/>
</dbReference>
<dbReference type="EMBL" id="AK172575">
    <property type="protein sequence ID" value="BAE43074.1"/>
    <property type="molecule type" value="mRNA"/>
</dbReference>
<dbReference type="EMBL" id="BC064433">
    <property type="protein sequence ID" value="AAH64433.1"/>
    <property type="molecule type" value="mRNA"/>
</dbReference>
<dbReference type="EMBL" id="BC080762">
    <property type="protein sequence ID" value="AAH80762.1"/>
    <property type="molecule type" value="mRNA"/>
</dbReference>
<dbReference type="EMBL" id="BC117869">
    <property type="protein sequence ID" value="AAI17870.1"/>
    <property type="molecule type" value="mRNA"/>
</dbReference>
<dbReference type="EMBL" id="BC117870">
    <property type="protein sequence ID" value="AAI17871.1"/>
    <property type="molecule type" value="mRNA"/>
</dbReference>
<dbReference type="EMBL" id="AK220347">
    <property type="protein sequence ID" value="BAD90243.1"/>
    <property type="molecule type" value="mRNA"/>
</dbReference>
<dbReference type="RefSeq" id="NP_001074747.2">
    <property type="nucleotide sequence ID" value="NM_001081278.2"/>
</dbReference>
<dbReference type="RefSeq" id="XP_006518822.1">
    <molecule id="Q8BYJ6-1"/>
    <property type="nucleotide sequence ID" value="XM_006518759.4"/>
</dbReference>
<dbReference type="RefSeq" id="XP_011243304.1">
    <molecule id="Q8BYJ6-2"/>
    <property type="nucleotide sequence ID" value="XM_011245002.3"/>
</dbReference>
<dbReference type="SMR" id="Q8BYJ6"/>
<dbReference type="BioGRID" id="229182">
    <property type="interactions" value="6"/>
</dbReference>
<dbReference type="FunCoup" id="Q8BYJ6">
    <property type="interactions" value="943"/>
</dbReference>
<dbReference type="IntAct" id="Q8BYJ6">
    <property type="interactions" value="2"/>
</dbReference>
<dbReference type="MINT" id="Q8BYJ6"/>
<dbReference type="STRING" id="10090.ENSMUSP00000125509"/>
<dbReference type="GlyGen" id="Q8BYJ6">
    <property type="glycosylation" value="6 sites, 3 N-linked glycans (3 sites), 1 O-linked glycan (1 site)"/>
</dbReference>
<dbReference type="iPTMnet" id="Q8BYJ6"/>
<dbReference type="PhosphoSitePlus" id="Q8BYJ6"/>
<dbReference type="jPOST" id="Q8BYJ6"/>
<dbReference type="PaxDb" id="10090-ENSMUSP00000125509"/>
<dbReference type="PeptideAtlas" id="Q8BYJ6"/>
<dbReference type="ProteomicsDB" id="254659">
    <molecule id="Q8BYJ6-1"/>
</dbReference>
<dbReference type="ProteomicsDB" id="254660">
    <molecule id="Q8BYJ6-2"/>
</dbReference>
<dbReference type="ProteomicsDB" id="254661">
    <molecule id="Q8BYJ6-3"/>
</dbReference>
<dbReference type="ProteomicsDB" id="254662">
    <molecule id="Q8BYJ6-4"/>
</dbReference>
<dbReference type="ProteomicsDB" id="254663">
    <molecule id="Q8BYJ6-5"/>
</dbReference>
<dbReference type="Pumba" id="Q8BYJ6"/>
<dbReference type="GeneID" id="210789"/>
<dbReference type="KEGG" id="mmu:210789"/>
<dbReference type="UCSC" id="uc007uvl.1">
    <molecule id="Q8BYJ6-5"/>
    <property type="organism name" value="mouse"/>
</dbReference>
<dbReference type="UCSC" id="uc007uvo.2">
    <molecule id="Q8BYJ6-3"/>
    <property type="organism name" value="mouse"/>
</dbReference>
<dbReference type="UCSC" id="uc007uvp.2">
    <molecule id="Q8BYJ6-4"/>
    <property type="organism name" value="mouse"/>
</dbReference>
<dbReference type="UCSC" id="uc007uvq.2">
    <molecule id="Q8BYJ6-2"/>
    <property type="organism name" value="mouse"/>
</dbReference>
<dbReference type="UCSC" id="uc007uvr.2">
    <molecule id="Q8BYJ6-1"/>
    <property type="organism name" value="mouse"/>
</dbReference>
<dbReference type="AGR" id="MGI:2429660"/>
<dbReference type="CTD" id="9882"/>
<dbReference type="MGI" id="MGI:2429660">
    <property type="gene designation" value="Tbc1d4"/>
</dbReference>
<dbReference type="eggNOG" id="KOG4436">
    <property type="taxonomic scope" value="Eukaryota"/>
</dbReference>
<dbReference type="InParanoid" id="Q8BYJ6"/>
<dbReference type="OrthoDB" id="295078at2759"/>
<dbReference type="PhylomeDB" id="Q8BYJ6"/>
<dbReference type="BioGRID-ORCS" id="210789">
    <property type="hits" value="2 hits in 76 CRISPR screens"/>
</dbReference>
<dbReference type="ChiTaRS" id="Tbc1d4">
    <property type="organism name" value="mouse"/>
</dbReference>
<dbReference type="PRO" id="PR:Q8BYJ6"/>
<dbReference type="Proteomes" id="UP000000589">
    <property type="component" value="Unplaced"/>
</dbReference>
<dbReference type="RNAct" id="Q8BYJ6">
    <property type="molecule type" value="protein"/>
</dbReference>
<dbReference type="GO" id="GO:0030659">
    <property type="term" value="C:cytoplasmic vesicle membrane"/>
    <property type="evidence" value="ECO:0000304"/>
    <property type="project" value="Reactome"/>
</dbReference>
<dbReference type="GO" id="GO:0005096">
    <property type="term" value="F:GTPase activator activity"/>
    <property type="evidence" value="ECO:0007669"/>
    <property type="project" value="UniProtKB-KW"/>
</dbReference>
<dbReference type="GO" id="GO:0032869">
    <property type="term" value="P:cellular response to insulin stimulus"/>
    <property type="evidence" value="ECO:0000316"/>
    <property type="project" value="MGI"/>
</dbReference>
<dbReference type="GO" id="GO:0016192">
    <property type="term" value="P:vesicle-mediated transport"/>
    <property type="evidence" value="ECO:0000250"/>
    <property type="project" value="UniProtKB"/>
</dbReference>
<dbReference type="CDD" id="cd00934">
    <property type="entry name" value="PTB"/>
    <property type="match status" value="1"/>
</dbReference>
<dbReference type="CDD" id="cd01269">
    <property type="entry name" value="PTB_TBC1D1_like"/>
    <property type="match status" value="1"/>
</dbReference>
<dbReference type="FunFam" id="1.10.472.80:FF:000003">
    <property type="entry name" value="Putative TBC1 domain family member 1"/>
    <property type="match status" value="1"/>
</dbReference>
<dbReference type="FunFam" id="1.10.8.270:FF:000001">
    <property type="entry name" value="TBC1 domain family member 1"/>
    <property type="match status" value="1"/>
</dbReference>
<dbReference type="FunFam" id="1.10.10.2750:FF:000002">
    <property type="entry name" value="TBC1 domain family member 4"/>
    <property type="match status" value="1"/>
</dbReference>
<dbReference type="FunFam" id="2.30.29.30:FF:000076">
    <property type="entry name" value="TBC1 domain family member 4 isoform X1"/>
    <property type="match status" value="1"/>
</dbReference>
<dbReference type="FunFam" id="2.30.29.30:FF:000287">
    <property type="entry name" value="TBC1 domain family member 4 isoform X1"/>
    <property type="match status" value="1"/>
</dbReference>
<dbReference type="Gene3D" id="1.10.10.2750">
    <property type="match status" value="1"/>
</dbReference>
<dbReference type="Gene3D" id="2.30.29.30">
    <property type="entry name" value="Pleckstrin-homology domain (PH domain)/Phosphotyrosine-binding domain (PTB)"/>
    <property type="match status" value="2"/>
</dbReference>
<dbReference type="Gene3D" id="1.10.8.270">
    <property type="entry name" value="putative rabgap domain of human tbc1 domain family member 14 like domains"/>
    <property type="match status" value="1"/>
</dbReference>
<dbReference type="Gene3D" id="1.10.472.80">
    <property type="entry name" value="Ypt/Rab-GAP domain of gyp1p, domain 3"/>
    <property type="match status" value="1"/>
</dbReference>
<dbReference type="InterPro" id="IPR021785">
    <property type="entry name" value="DUF3350"/>
</dbReference>
<dbReference type="InterPro" id="IPR011993">
    <property type="entry name" value="PH-like_dom_sf"/>
</dbReference>
<dbReference type="InterPro" id="IPR006020">
    <property type="entry name" value="PTB/PI_dom"/>
</dbReference>
<dbReference type="InterPro" id="IPR000195">
    <property type="entry name" value="Rab-GAP-TBC_dom"/>
</dbReference>
<dbReference type="InterPro" id="IPR035969">
    <property type="entry name" value="Rab-GAP_TBC_sf"/>
</dbReference>
<dbReference type="InterPro" id="IPR050302">
    <property type="entry name" value="Rab_GAP_TBC_domain"/>
</dbReference>
<dbReference type="PANTHER" id="PTHR47219">
    <property type="entry name" value="RAB GTPASE-ACTIVATING PROTEIN 1-LIKE"/>
    <property type="match status" value="1"/>
</dbReference>
<dbReference type="PANTHER" id="PTHR47219:SF14">
    <property type="entry name" value="TBC1 DOMAIN FAMILY MEMBER 4"/>
    <property type="match status" value="1"/>
</dbReference>
<dbReference type="Pfam" id="PF11830">
    <property type="entry name" value="DUF3350"/>
    <property type="match status" value="1"/>
</dbReference>
<dbReference type="Pfam" id="PF00640">
    <property type="entry name" value="PID"/>
    <property type="match status" value="2"/>
</dbReference>
<dbReference type="Pfam" id="PF00566">
    <property type="entry name" value="RabGAP-TBC"/>
    <property type="match status" value="1"/>
</dbReference>
<dbReference type="SMART" id="SM00462">
    <property type="entry name" value="PTB"/>
    <property type="match status" value="2"/>
</dbReference>
<dbReference type="SMART" id="SM00164">
    <property type="entry name" value="TBC"/>
    <property type="match status" value="1"/>
</dbReference>
<dbReference type="SUPFAM" id="SSF50729">
    <property type="entry name" value="PH domain-like"/>
    <property type="match status" value="2"/>
</dbReference>
<dbReference type="SUPFAM" id="SSF47923">
    <property type="entry name" value="Ypt/Rab-GAP domain of gyp1p"/>
    <property type="match status" value="2"/>
</dbReference>
<dbReference type="PROSITE" id="PS01179">
    <property type="entry name" value="PID"/>
    <property type="match status" value="1"/>
</dbReference>
<dbReference type="PROSITE" id="PS50086">
    <property type="entry name" value="TBC_RABGAP"/>
    <property type="match status" value="1"/>
</dbReference>
<feature type="chain" id="PRO_0000208027" description="TBC1 domain family member 4">
    <location>
        <begin position="1"/>
        <end position="1307"/>
    </location>
</feature>
<feature type="domain" description="PID 1" evidence="3">
    <location>
        <begin position="53"/>
        <end position="209"/>
    </location>
</feature>
<feature type="domain" description="PID 2" evidence="3">
    <location>
        <begin position="319"/>
        <end position="475"/>
    </location>
</feature>
<feature type="domain" description="Rab-GAP TBC" evidence="4">
    <location>
        <begin position="927"/>
        <end position="1121"/>
    </location>
</feature>
<feature type="region of interest" description="Disordered" evidence="5">
    <location>
        <begin position="1"/>
        <end position="30"/>
    </location>
</feature>
<feature type="region of interest" description="Disordered" evidence="5">
    <location>
        <begin position="237"/>
        <end position="276"/>
    </location>
</feature>
<feature type="region of interest" description="Disordered" evidence="5">
    <location>
        <begin position="330"/>
        <end position="360"/>
    </location>
</feature>
<feature type="region of interest" description="Disordered" evidence="5">
    <location>
        <begin position="603"/>
        <end position="684"/>
    </location>
</feature>
<feature type="region of interest" description="Disordered" evidence="5">
    <location>
        <begin position="732"/>
        <end position="774"/>
    </location>
</feature>
<feature type="compositionally biased region" description="Pro residues" evidence="5">
    <location>
        <begin position="13"/>
        <end position="23"/>
    </location>
</feature>
<feature type="compositionally biased region" description="Basic and acidic residues" evidence="5">
    <location>
        <begin position="237"/>
        <end position="246"/>
    </location>
</feature>
<feature type="compositionally biased region" description="Pro residues" evidence="5">
    <location>
        <begin position="615"/>
        <end position="624"/>
    </location>
</feature>
<feature type="compositionally biased region" description="Polar residues" evidence="5">
    <location>
        <begin position="757"/>
        <end position="767"/>
    </location>
</feature>
<feature type="modified residue" description="N-acetylmethionine" evidence="2">
    <location>
        <position position="1"/>
    </location>
</feature>
<feature type="modified residue" description="Phosphoserine" evidence="15">
    <location>
        <position position="258"/>
    </location>
</feature>
<feature type="modified residue" description="Phosphoserine" evidence="15">
    <location>
        <position position="261"/>
    </location>
</feature>
<feature type="modified residue" description="Phosphoserine" evidence="2">
    <location>
        <position position="320"/>
    </location>
</feature>
<feature type="modified residue" description="Phosphoserine; by PKB/AKT1" evidence="7">
    <location>
        <position position="324"/>
    </location>
</feature>
<feature type="modified residue" description="Phosphoserine; by PKB/AKT1" evidence="7">
    <location>
        <position position="348"/>
    </location>
</feature>
<feature type="modified residue" description="Phosphoserine" evidence="2">
    <location>
        <position position="351"/>
    </location>
</feature>
<feature type="modified residue" description="N6-acetyllysine" evidence="2">
    <location>
        <position position="484"/>
    </location>
</feature>
<feature type="modified residue" description="Phosphoserine" evidence="15">
    <location>
        <position position="573"/>
    </location>
</feature>
<feature type="modified residue" description="Phosphothreonine" evidence="2">
    <location>
        <position position="575"/>
    </location>
</feature>
<feature type="modified residue" description="Phosphoserine; by PKB/AKT1" evidence="7 15">
    <location>
        <position position="577"/>
    </location>
</feature>
<feature type="modified residue" description="Omega-N-methylarginine" evidence="16">
    <location>
        <position position="584"/>
    </location>
</feature>
<feature type="modified residue" description="Phosphoserine; by PKB/AKT1" evidence="6 7">
    <location>
        <position position="595"/>
    </location>
</feature>
<feature type="modified residue" description="Phosphoserine" evidence="15">
    <location>
        <position position="598"/>
    </location>
</feature>
<feature type="modified residue" description="Phosphoserine" evidence="15">
    <location>
        <position position="616"/>
    </location>
</feature>
<feature type="modified residue" description="Phosphothreonine" evidence="15">
    <location>
        <position position="620"/>
    </location>
</feature>
<feature type="modified residue" description="Phosphoserine" evidence="15">
    <location>
        <position position="624"/>
    </location>
</feature>
<feature type="modified residue" description="Phosphothreonine; by PKB/AKT1" evidence="6 7">
    <location>
        <position position="649"/>
    </location>
</feature>
<feature type="modified residue" description="Phosphoserine" evidence="2">
    <location>
        <position position="673"/>
    </location>
</feature>
<feature type="modified residue" description="Phosphoserine; by PKB/AKT1" evidence="7">
    <location>
        <position position="758"/>
    </location>
</feature>
<feature type="modified residue" description="Phosphoserine" evidence="15">
    <location>
        <position position="761"/>
    </location>
</feature>
<feature type="modified residue" description="Phosphoserine" evidence="15">
    <location>
        <position position="764"/>
    </location>
</feature>
<feature type="modified residue" description="Phosphothreonine" evidence="15">
    <location>
        <position position="770"/>
    </location>
</feature>
<feature type="splice variant" id="VSP_036872" description="In isoform 5." evidence="12">
    <location>
        <begin position="1"/>
        <end position="793"/>
    </location>
</feature>
<feature type="splice variant" id="VSP_036873" description="In isoform 4." evidence="11">
    <location>
        <position position="508"/>
    </location>
</feature>
<feature type="splice variant" id="VSP_013891" description="In isoform 2 and isoform 4." evidence="11 12 13">
    <location>
        <begin position="685"/>
        <end position="747"/>
    </location>
</feature>
<feature type="splice variant" id="VSP_036874" description="In isoform 3." evidence="11">
    <location>
        <begin position="685"/>
        <end position="739"/>
    </location>
</feature>
<feature type="splice variant" id="VSP_036875" description="In isoform 5." evidence="12">
    <original>SPSAMQQQK</original>
    <variation>MPLTVFFSA</variation>
    <location>
        <begin position="794"/>
        <end position="802"/>
    </location>
</feature>
<feature type="splice variant" id="VSP_036876" description="In isoform 2, isoform 3 and isoform 4." evidence="11 12 13">
    <original>E</original>
    <variation>G</variation>
    <location>
        <position position="873"/>
    </location>
</feature>
<feature type="splice variant" id="VSP_036877" description="In isoform 5." evidence="12">
    <location>
        <position position="873"/>
    </location>
</feature>
<feature type="splice variant" id="VSP_036878" description="In isoform 2, isoform 3 and isoform 4." evidence="11 12 13">
    <location>
        <begin position="874"/>
        <end position="1307"/>
    </location>
</feature>
<feature type="sequence conflict" description="In Ref. 1; BAC30322." evidence="14" ref="1">
    <original>I</original>
    <variation>V</variation>
    <location>
        <position position="171"/>
    </location>
</feature>
<feature type="sequence conflict" description="In Ref. 1; BAC30322." evidence="14" ref="1">
    <original>H</original>
    <variation>Y</variation>
    <location>
        <position position="631"/>
    </location>
</feature>
<feature type="sequence conflict" description="In Ref. 1; BAC30322." evidence="14" ref="1">
    <original>E</original>
    <variation>A</variation>
    <location>
        <position position="840"/>
    </location>
</feature>
<feature type="sequence conflict" description="In Ref. 2; AAH64433." evidence="14" ref="2">
    <original>E</original>
    <variation>K</variation>
    <location>
        <position position="840"/>
    </location>
</feature>
<feature type="sequence conflict" description="In Ref. 2; AAH80762." evidence="14" ref="2">
    <original>S</original>
    <variation>K</variation>
    <location>
        <position position="844"/>
    </location>
</feature>
<feature type="sequence conflict" description="In Ref. 1; BAE42613." evidence="14" ref="1">
    <original>Q</original>
    <variation>L</variation>
    <location>
        <position position="880"/>
    </location>
</feature>
<feature type="sequence conflict" description="In Ref. 1; BAE42613." evidence="14" ref="1">
    <original>R</original>
    <variation>K</variation>
    <location>
        <position position="914"/>
    </location>
</feature>
<feature type="sequence conflict" description="In Ref. 1; BAE42613." evidence="14" ref="1">
    <original>A</original>
    <variation>T</variation>
    <location>
        <position position="974"/>
    </location>
</feature>
<accession>Q8BYJ6</accession>
<accession>Q149C0</accession>
<accession>Q149C1</accession>
<accession>Q3T9E8</accession>
<accession>Q3TAQ5</accession>
<accession>Q5DU23</accession>
<accession>Q66JU2</accession>
<accession>Q6P2M2</accession>
<accession>Q8BMH6</accession>
<accession>Q8BXM2</accession>
<keyword id="KW-0007">Acetylation</keyword>
<keyword id="KW-0025">Alternative splicing</keyword>
<keyword id="KW-0963">Cytoplasm</keyword>
<keyword id="KW-0343">GTPase activation</keyword>
<keyword id="KW-0488">Methylation</keyword>
<keyword id="KW-0597">Phosphoprotein</keyword>
<keyword id="KW-1185">Reference proteome</keyword>
<keyword id="KW-0677">Repeat</keyword>
<reference key="1">
    <citation type="journal article" date="2005" name="Science">
        <title>The transcriptional landscape of the mammalian genome.</title>
        <authorList>
            <person name="Carninci P."/>
            <person name="Kasukawa T."/>
            <person name="Katayama S."/>
            <person name="Gough J."/>
            <person name="Frith M.C."/>
            <person name="Maeda N."/>
            <person name="Oyama R."/>
            <person name="Ravasi T."/>
            <person name="Lenhard B."/>
            <person name="Wells C."/>
            <person name="Kodzius R."/>
            <person name="Shimokawa K."/>
            <person name="Bajic V.B."/>
            <person name="Brenner S.E."/>
            <person name="Batalov S."/>
            <person name="Forrest A.R."/>
            <person name="Zavolan M."/>
            <person name="Davis M.J."/>
            <person name="Wilming L.G."/>
            <person name="Aidinis V."/>
            <person name="Allen J.E."/>
            <person name="Ambesi-Impiombato A."/>
            <person name="Apweiler R."/>
            <person name="Aturaliya R.N."/>
            <person name="Bailey T.L."/>
            <person name="Bansal M."/>
            <person name="Baxter L."/>
            <person name="Beisel K.W."/>
            <person name="Bersano T."/>
            <person name="Bono H."/>
            <person name="Chalk A.M."/>
            <person name="Chiu K.P."/>
            <person name="Choudhary V."/>
            <person name="Christoffels A."/>
            <person name="Clutterbuck D.R."/>
            <person name="Crowe M.L."/>
            <person name="Dalla E."/>
            <person name="Dalrymple B.P."/>
            <person name="de Bono B."/>
            <person name="Della Gatta G."/>
            <person name="di Bernardo D."/>
            <person name="Down T."/>
            <person name="Engstrom P."/>
            <person name="Fagiolini M."/>
            <person name="Faulkner G."/>
            <person name="Fletcher C.F."/>
            <person name="Fukushima T."/>
            <person name="Furuno M."/>
            <person name="Futaki S."/>
            <person name="Gariboldi M."/>
            <person name="Georgii-Hemming P."/>
            <person name="Gingeras T.R."/>
            <person name="Gojobori T."/>
            <person name="Green R.E."/>
            <person name="Gustincich S."/>
            <person name="Harbers M."/>
            <person name="Hayashi Y."/>
            <person name="Hensch T.K."/>
            <person name="Hirokawa N."/>
            <person name="Hill D."/>
            <person name="Huminiecki L."/>
            <person name="Iacono M."/>
            <person name="Ikeo K."/>
            <person name="Iwama A."/>
            <person name="Ishikawa T."/>
            <person name="Jakt M."/>
            <person name="Kanapin A."/>
            <person name="Katoh M."/>
            <person name="Kawasawa Y."/>
            <person name="Kelso J."/>
            <person name="Kitamura H."/>
            <person name="Kitano H."/>
            <person name="Kollias G."/>
            <person name="Krishnan S.P."/>
            <person name="Kruger A."/>
            <person name="Kummerfeld S.K."/>
            <person name="Kurochkin I.V."/>
            <person name="Lareau L.F."/>
            <person name="Lazarevic D."/>
            <person name="Lipovich L."/>
            <person name="Liu J."/>
            <person name="Liuni S."/>
            <person name="McWilliam S."/>
            <person name="Madan Babu M."/>
            <person name="Madera M."/>
            <person name="Marchionni L."/>
            <person name="Matsuda H."/>
            <person name="Matsuzawa S."/>
            <person name="Miki H."/>
            <person name="Mignone F."/>
            <person name="Miyake S."/>
            <person name="Morris K."/>
            <person name="Mottagui-Tabar S."/>
            <person name="Mulder N."/>
            <person name="Nakano N."/>
            <person name="Nakauchi H."/>
            <person name="Ng P."/>
            <person name="Nilsson R."/>
            <person name="Nishiguchi S."/>
            <person name="Nishikawa S."/>
            <person name="Nori F."/>
            <person name="Ohara O."/>
            <person name="Okazaki Y."/>
            <person name="Orlando V."/>
            <person name="Pang K.C."/>
            <person name="Pavan W.J."/>
            <person name="Pavesi G."/>
            <person name="Pesole G."/>
            <person name="Petrovsky N."/>
            <person name="Piazza S."/>
            <person name="Reed J."/>
            <person name="Reid J.F."/>
            <person name="Ring B.Z."/>
            <person name="Ringwald M."/>
            <person name="Rost B."/>
            <person name="Ruan Y."/>
            <person name="Salzberg S.L."/>
            <person name="Sandelin A."/>
            <person name="Schneider C."/>
            <person name="Schoenbach C."/>
            <person name="Sekiguchi K."/>
            <person name="Semple C.A."/>
            <person name="Seno S."/>
            <person name="Sessa L."/>
            <person name="Sheng Y."/>
            <person name="Shibata Y."/>
            <person name="Shimada H."/>
            <person name="Shimada K."/>
            <person name="Silva D."/>
            <person name="Sinclair B."/>
            <person name="Sperling S."/>
            <person name="Stupka E."/>
            <person name="Sugiura K."/>
            <person name="Sultana R."/>
            <person name="Takenaka Y."/>
            <person name="Taki K."/>
            <person name="Tammoja K."/>
            <person name="Tan S.L."/>
            <person name="Tang S."/>
            <person name="Taylor M.S."/>
            <person name="Tegner J."/>
            <person name="Teichmann S.A."/>
            <person name="Ueda H.R."/>
            <person name="van Nimwegen E."/>
            <person name="Verardo R."/>
            <person name="Wei C.L."/>
            <person name="Yagi K."/>
            <person name="Yamanishi H."/>
            <person name="Zabarovsky E."/>
            <person name="Zhu S."/>
            <person name="Zimmer A."/>
            <person name="Hide W."/>
            <person name="Bult C."/>
            <person name="Grimmond S.M."/>
            <person name="Teasdale R.D."/>
            <person name="Liu E.T."/>
            <person name="Brusic V."/>
            <person name="Quackenbush J."/>
            <person name="Wahlestedt C."/>
            <person name="Mattick J.S."/>
            <person name="Hume D.A."/>
            <person name="Kai C."/>
            <person name="Sasaki D."/>
            <person name="Tomaru Y."/>
            <person name="Fukuda S."/>
            <person name="Kanamori-Katayama M."/>
            <person name="Suzuki M."/>
            <person name="Aoki J."/>
            <person name="Arakawa T."/>
            <person name="Iida J."/>
            <person name="Imamura K."/>
            <person name="Itoh M."/>
            <person name="Kato T."/>
            <person name="Kawaji H."/>
            <person name="Kawagashira N."/>
            <person name="Kawashima T."/>
            <person name="Kojima M."/>
            <person name="Kondo S."/>
            <person name="Konno H."/>
            <person name="Nakano K."/>
            <person name="Ninomiya N."/>
            <person name="Nishio T."/>
            <person name="Okada M."/>
            <person name="Plessy C."/>
            <person name="Shibata K."/>
            <person name="Shiraki T."/>
            <person name="Suzuki S."/>
            <person name="Tagami M."/>
            <person name="Waki K."/>
            <person name="Watahiki A."/>
            <person name="Okamura-Oho Y."/>
            <person name="Suzuki H."/>
            <person name="Kawai J."/>
            <person name="Hayashizaki Y."/>
        </authorList>
    </citation>
    <scope>NUCLEOTIDE SEQUENCE [LARGE SCALE MRNA] (ISOFORMS 2 AND 5)</scope>
    <scope>NUCLEOTIDE SEQUENCE [LARGE SCALE MRNA] OF 1-840 (ISOFORM 1)</scope>
    <source>
        <strain>C57BL/6J</strain>
        <strain>NOD</strain>
        <tissue>Forelimb</tissue>
        <tissue>Retina</tissue>
        <tissue>Spinal cord</tissue>
        <tissue>Spleen</tissue>
    </source>
</reference>
<reference key="2">
    <citation type="journal article" date="2004" name="Genome Res.">
        <title>The status, quality, and expansion of the NIH full-length cDNA project: the Mammalian Gene Collection (MGC).</title>
        <authorList>
            <consortium name="The MGC Project Team"/>
        </authorList>
    </citation>
    <scope>NUCLEOTIDE SEQUENCE [LARGE SCALE MRNA] (ISOFORMS 3 AND 4)</scope>
    <scope>NUCLEOTIDE SEQUENCE [LARGE SCALE MRNA] OF 1-844 (ISOFORM 2)</scope>
    <source>
        <strain>NMRI</strain>
        <tissue>Mammary tumor</tissue>
    </source>
</reference>
<reference key="3">
    <citation type="submission" date="2005-02" db="EMBL/GenBank/DDBJ databases">
        <title>Prediction of the coding sequences of mouse homologues of KIAA gene. The complete nucleotide sequences of mouse KIAA-homologous cDNAs identified by screening of terminal sequences of cDNA clones randomly sampled from size-fractionated libraries.</title>
        <authorList>
            <person name="Okazaki N."/>
            <person name="Kikuno R.F."/>
            <person name="Ohara R."/>
            <person name="Inamoto S."/>
            <person name="Nagase T."/>
            <person name="Ohara O."/>
            <person name="Koga H."/>
        </authorList>
    </citation>
    <scope>NUCLEOTIDE SEQUENCE [LARGE SCALE MRNA] OF 289-1307 (ISOFORM 2)</scope>
    <source>
        <tissue>Fetal brain</tissue>
    </source>
</reference>
<reference key="4">
    <citation type="journal article" date="2002" name="J. Biol. Chem.">
        <title>A method to identify serine kinase substrates. Akt phosphorylates a novel adipocyte protein with a Rab GTPase-activating protein (GAP) domain.</title>
        <authorList>
            <person name="Kane S."/>
            <person name="Sano H."/>
            <person name="Liu S.C.H."/>
            <person name="Asara J.M."/>
            <person name="Lane W.S."/>
            <person name="Garner C.C."/>
            <person name="Lienhard G.E."/>
        </authorList>
    </citation>
    <scope>PHOSPHORYLATION AT SER-595 AND THR-649</scope>
    <scope>SUBCELLULAR LOCATION</scope>
    <scope>TISSUE SPECIFICITY</scope>
</reference>
<reference key="5">
    <citation type="journal article" date="2003" name="J. Biol. Chem.">
        <title>Insulin-stimulated phosphorylation of a Rab GTPase-activating protein regulates GLUT4 translocation.</title>
        <authorList>
            <person name="Sano H."/>
            <person name="Kane S."/>
            <person name="Sano E."/>
            <person name="Miinea C.P."/>
            <person name="Asara J.M."/>
            <person name="Lane W.S."/>
            <person name="Garner C.W."/>
            <person name="Lienhard G.E."/>
        </authorList>
    </citation>
    <scope>PHOSPHORYLATION AT SER-324; SER-348; SER-577; SER-595; THR-649 AND SER-758</scope>
</reference>
<reference key="6">
    <citation type="journal article" date="2004" name="Mol. Biol. Cell">
        <title>Insulin stimulation of GLUT4 exocytosis, but not its inhibition of endocytosis, is dependent on RabGAP AS160.</title>
        <authorList>
            <person name="Zeigerer A."/>
            <person name="McBrayer M.K."/>
            <person name="McGraw T.E."/>
        </authorList>
    </citation>
    <scope>EFFECT ON GLUT4 TRANSLOCATION</scope>
</reference>
<reference key="7">
    <citation type="journal article" date="2006" name="Diabetes">
        <title>AMPK-mediated AS160 phosphorylation in skeletal muscle is dependent on AMPK catalytic and regulatory subunits.</title>
        <authorList>
            <person name="Treebak J.T."/>
            <person name="Glund S."/>
            <person name="Deshmukh A."/>
            <person name="Klein D.K."/>
            <person name="Long Y.C."/>
            <person name="Jensen T.E."/>
            <person name="Jorgensen S.B."/>
            <person name="Viollet B."/>
            <person name="Andersson L."/>
            <person name="Neumann D."/>
            <person name="Wallimann T."/>
            <person name="Richter E.A."/>
            <person name="Chibalin A.V."/>
            <person name="Zierath J.R."/>
            <person name="Wojtaszewski J.F."/>
        </authorList>
    </citation>
    <scope>PHOSPHORYLATION BY AMPK</scope>
</reference>
<reference key="8">
    <citation type="journal article" date="2006" name="Diabetes">
        <title>Distinct signals regulate AS160 phosphorylation in response to insulin, AICAR, and contraction in mouse skeletal muscle.</title>
        <authorList>
            <person name="Kramer H.F."/>
            <person name="Witczak C.A."/>
            <person name="Fujii N."/>
            <person name="Jessen N."/>
            <person name="Taylor E.B."/>
            <person name="Arnolds D.E."/>
            <person name="Sakamoto K."/>
            <person name="Hirshman M.F."/>
            <person name="Goodyear L.J."/>
        </authorList>
    </citation>
    <scope>PHOSPHORYLATION BY AMPK</scope>
</reference>
<reference key="9">
    <citation type="journal article" date="2008" name="Diabetes">
        <title>Rab GTPase-activating protein AS160 is a major downstream effector of protein kinase B/Akt signaling in pancreatic beta-cells.</title>
        <authorList>
            <person name="Bouzakri K."/>
            <person name="Ribaux P."/>
            <person name="Tomas A."/>
            <person name="Parnaud G."/>
            <person name="Rickenbach K."/>
            <person name="Halban P.A."/>
        </authorList>
    </citation>
    <scope>TISSUE SPECIFICITY</scope>
</reference>
<reference key="10">
    <citation type="journal article" date="2010" name="Cell">
        <title>A tissue-specific atlas of mouse protein phosphorylation and expression.</title>
        <authorList>
            <person name="Huttlin E.L."/>
            <person name="Jedrychowski M.P."/>
            <person name="Elias J.E."/>
            <person name="Goswami T."/>
            <person name="Rad R."/>
            <person name="Beausoleil S.A."/>
            <person name="Villen J."/>
            <person name="Haas W."/>
            <person name="Sowa M.E."/>
            <person name="Gygi S.P."/>
        </authorList>
    </citation>
    <scope>PHOSPHORYLATION [LARGE SCALE ANALYSIS] AT SER-258; SER-261; SER-573; SER-577; SER-598; SER-616; THR-620; SER-624; SER-761; SER-764 AND THR-770</scope>
    <scope>IDENTIFICATION BY MASS SPECTROMETRY [LARGE SCALE ANALYSIS]</scope>
    <source>
        <tissue>Brain</tissue>
        <tissue>Brown adipose tissue</tissue>
        <tissue>Heart</tissue>
        <tissue>Kidney</tissue>
        <tissue>Lung</tissue>
        <tissue>Pancreas</tissue>
        <tissue>Spleen</tissue>
        <tissue>Testis</tissue>
    </source>
</reference>
<reference key="11">
    <citation type="journal article" date="2014" name="Mol. Cell. Proteomics">
        <title>Immunoaffinity enrichment and mass spectrometry analysis of protein methylation.</title>
        <authorList>
            <person name="Guo A."/>
            <person name="Gu H."/>
            <person name="Zhou J."/>
            <person name="Mulhern D."/>
            <person name="Wang Y."/>
            <person name="Lee K.A."/>
            <person name="Yang V."/>
            <person name="Aguiar M."/>
            <person name="Kornhauser J."/>
            <person name="Jia X."/>
            <person name="Ren J."/>
            <person name="Beausoleil S.A."/>
            <person name="Silva J.C."/>
            <person name="Vemulapalli V."/>
            <person name="Bedford M.T."/>
            <person name="Comb M.J."/>
        </authorList>
    </citation>
    <scope>METHYLATION [LARGE SCALE ANALYSIS] AT ARG-584</scope>
    <scope>IDENTIFICATION BY MASS SPECTROMETRY [LARGE SCALE ANALYSIS]</scope>
    <source>
        <tissue>Brain</tissue>
        <tissue>Embryo</tissue>
    </source>
</reference>
<comment type="function">
    <text evidence="1">May act as a GTPase-activating protein for RAB2A, RAB8A, RAB10 and RAB14. Promotes insulin-induced glucose transporter SLC2A4/GLUT4 translocation at the plasma membrane, thus increasing glucose uptake (By similarity).</text>
</comment>
<comment type="subcellular location">
    <subcellularLocation>
        <location evidence="6">Cytoplasm</location>
    </subcellularLocation>
    <text evidence="1">Cytoplasmic perinuclear.</text>
</comment>
<comment type="alternative products">
    <event type="alternative splicing"/>
    <isoform>
        <id>Q8BYJ6-1</id>
        <name>1</name>
        <sequence type="displayed"/>
    </isoform>
    <isoform>
        <id>Q8BYJ6-2</id>
        <name>2</name>
        <sequence type="described" ref="VSP_013891 VSP_036876 VSP_036878"/>
    </isoform>
    <isoform>
        <id>Q8BYJ6-3</id>
        <name>3</name>
        <sequence type="described" ref="VSP_036874 VSP_036876 VSP_036878"/>
    </isoform>
    <isoform>
        <id>Q8BYJ6-4</id>
        <name>4</name>
        <sequence type="described" ref="VSP_036873 VSP_013891 VSP_036876 VSP_036878"/>
    </isoform>
    <isoform>
        <id>Q8BYJ6-5</id>
        <name>5</name>
        <sequence type="described" ref="VSP_036872 VSP_036875 VSP_036877"/>
    </isoform>
</comment>
<comment type="tissue specificity">
    <text evidence="6 10">Widely expressed, including in pancreatic beta cells.</text>
</comment>
<comment type="PTM">
    <text evidence="6 7 8 9">Phosphorylated by AKT1; insulin-induced. Also phosphorylated by AMPK in response to insulin. Insulin-stimulated phosphorylation is required for SLC2A4/GLUT4 translocation. Has no effect on SLC2A4/GLUT4 internalization.</text>
</comment>
<gene>
    <name type="primary">Tbc1d4</name>
    <name type="synonym">As160</name>
    <name type="synonym">Kiaa0603</name>
</gene>
<evidence type="ECO:0000250" key="1"/>
<evidence type="ECO:0000250" key="2">
    <source>
        <dbReference type="UniProtKB" id="O60343"/>
    </source>
</evidence>
<evidence type="ECO:0000255" key="3">
    <source>
        <dbReference type="PROSITE-ProRule" id="PRU00148"/>
    </source>
</evidence>
<evidence type="ECO:0000255" key="4">
    <source>
        <dbReference type="PROSITE-ProRule" id="PRU00163"/>
    </source>
</evidence>
<evidence type="ECO:0000256" key="5">
    <source>
        <dbReference type="SAM" id="MobiDB-lite"/>
    </source>
</evidence>
<evidence type="ECO:0000269" key="6">
    <source>
    </source>
</evidence>
<evidence type="ECO:0000269" key="7">
    <source>
    </source>
</evidence>
<evidence type="ECO:0000269" key="8">
    <source>
    </source>
</evidence>
<evidence type="ECO:0000269" key="9">
    <source>
    </source>
</evidence>
<evidence type="ECO:0000269" key="10">
    <source>
    </source>
</evidence>
<evidence type="ECO:0000303" key="11">
    <source>
    </source>
</evidence>
<evidence type="ECO:0000303" key="12">
    <source>
    </source>
</evidence>
<evidence type="ECO:0000303" key="13">
    <source ref="3"/>
</evidence>
<evidence type="ECO:0000305" key="14"/>
<evidence type="ECO:0007744" key="15">
    <source>
    </source>
</evidence>
<evidence type="ECO:0007744" key="16">
    <source>
    </source>
</evidence>
<sequence length="1307" mass="147451">MESPSCIQDEPFPHPLEPEPSAPAQPGATKPGDKRFRLWYVGGSCLDRRTTLPMLPWLMAEIRRRSQKPDAGGCGAPAAREVILVLSAPFLRCVPAPGAGVGGGAGSGAVQPNTGVFIFEHKAQHISRFIHNSHDLTYFAYLIKAQPDDPESQMACHVFRATDPNQVPDVISSIRQLSKAAMKEDSKPSKDNEDAFYNSQKFEVLYCGRVIVTHKKAPSSLIDDCKDKFSLHEQQRLKLQGERGGDPGDEMGVLEVESPVSPDDSLPEKADGTVNSPRALPSLASLPALASQPALASSRVCFPERILEDCGFDEQQEFRSRCSSVTGVMQKKVHENNQKTQPRRRHASAPSHVQPSDSEKNRTMLFQVGRFEINLISPDTKSVVLEKNFKDISSCSQGIKHVDHFGFICRESPEPGLSQYICYVFQCANESLVDEVMLTLKQAFSTAAALQSAKTQIKLCETCPMHSLHKLCERIEGLYPPRAKLVIQRHLSSLTDNEQADIFERVQKMKPISDQEENELVILHLRQLCEAKQRTHVHIGEGPAIISNSTIPENVTSGGRFKLDVLKNKAKRSLTSSLENIFSRGANRMRGRLGSMDSFERANSLASEKDFSPGDSPPGTPPASPLSSAWHAFPEEDSDSPQFRRRAHTFSHPPSSSRRKLNLQDGKAHGLRSPLLRQSSSEQCSIVPSARRMYKESNSSCSLPSLHTSFSAPSFTAPSFLKSFYQNSGRLSPQYENEIRQDTASESSDGEGRKRTSSTCSNESLNAGGTPVTPRRVSWRQRIFLRVASPVNKSPSAMQQQKDGLDRTELLPLSPLSPTMEEEPLIIFLSGDEDTEKVEEKKKSKELKSLWKKAIHQQILLLRMEKENQKLEEARRDELQSRKVKLDYEEVGTCQKEILIAWDKKLLNCRTKIRCDMEDIHTSLKEGVPKSRRGEIWQFLALQYRLRHRLPNKHQPPDTSYKELLKQLTAQQHAILVDLGRTFPTHPYFSVQLGAGQLSLFNLLKAYSLLDKEVGYCQGISFVAGVLLLHMSEEQAFEMLKFLMYDLGFRKQYRPDMMSLQIQMYQLSRLLHDYHRELYNHLEENEISPSLYAAPWFLTLFASQFPLGFVARVFDIIFLQGTEVIFKVALSLLSSQEALIMECENFENIVEFLKSTLPDMNTTEMEKIITQVFEMDISKQLHAYEVEYHVLQDELLESSYACEDNESLEKLERANNQLKRQNMDLLEKLQVAHAKIQALESNLETLLTRETKMKALIRTLEQDKMAYQKTVEQIRKLLPADALANCELLLKDLTHPTNDKAKAGNKP</sequence>
<protein>
    <recommendedName>
        <fullName>TBC1 domain family member 4</fullName>
    </recommendedName>
    <alternativeName>
        <fullName>Akt substrate of 160 kDa</fullName>
        <shortName>AS160</shortName>
    </alternativeName>
</protein>
<proteinExistence type="evidence at protein level"/>
<name>TBCD4_MOUSE</name>